<name>RL11_XYLFA</name>
<comment type="function">
    <text evidence="1">Forms part of the ribosomal stalk which helps the ribosome interact with GTP-bound translation factors.</text>
</comment>
<comment type="subunit">
    <text evidence="1">Part of the ribosomal stalk of the 50S ribosomal subunit. Interacts with L10 and the large rRNA to form the base of the stalk. L10 forms an elongated spine to which L12 dimers bind in a sequential fashion forming a multimeric L10(L12)X complex.</text>
</comment>
<comment type="PTM">
    <text evidence="1">One or more lysine residues are methylated.</text>
</comment>
<comment type="similarity">
    <text evidence="1">Belongs to the universal ribosomal protein uL11 family.</text>
</comment>
<comment type="sequence caution" evidence="2">
    <conflict type="erroneous initiation">
        <sequence resource="EMBL-CDS" id="AAF85434"/>
    </conflict>
</comment>
<protein>
    <recommendedName>
        <fullName evidence="1">Large ribosomal subunit protein uL11</fullName>
    </recommendedName>
    <alternativeName>
        <fullName evidence="2">50S ribosomal protein L11</fullName>
    </alternativeName>
</protein>
<reference key="1">
    <citation type="journal article" date="2000" name="Nature">
        <title>The genome sequence of the plant pathogen Xylella fastidiosa.</title>
        <authorList>
            <person name="Simpson A.J.G."/>
            <person name="Reinach F.C."/>
            <person name="Arruda P."/>
            <person name="Abreu F.A."/>
            <person name="Acencio M."/>
            <person name="Alvarenga R."/>
            <person name="Alves L.M.C."/>
            <person name="Araya J.E."/>
            <person name="Baia G.S."/>
            <person name="Baptista C.S."/>
            <person name="Barros M.H."/>
            <person name="Bonaccorsi E.D."/>
            <person name="Bordin S."/>
            <person name="Bove J.M."/>
            <person name="Briones M.R.S."/>
            <person name="Bueno M.R.P."/>
            <person name="Camargo A.A."/>
            <person name="Camargo L.E.A."/>
            <person name="Carraro D.M."/>
            <person name="Carrer H."/>
            <person name="Colauto N.B."/>
            <person name="Colombo C."/>
            <person name="Costa F.F."/>
            <person name="Costa M.C.R."/>
            <person name="Costa-Neto C.M."/>
            <person name="Coutinho L.L."/>
            <person name="Cristofani M."/>
            <person name="Dias-Neto E."/>
            <person name="Docena C."/>
            <person name="El-Dorry H."/>
            <person name="Facincani A.P."/>
            <person name="Ferreira A.J.S."/>
            <person name="Ferreira V.C.A."/>
            <person name="Ferro J.A."/>
            <person name="Fraga J.S."/>
            <person name="Franca S.C."/>
            <person name="Franco M.C."/>
            <person name="Frohme M."/>
            <person name="Furlan L.R."/>
            <person name="Garnier M."/>
            <person name="Goldman G.H."/>
            <person name="Goldman M.H.S."/>
            <person name="Gomes S.L."/>
            <person name="Gruber A."/>
            <person name="Ho P.L."/>
            <person name="Hoheisel J.D."/>
            <person name="Junqueira M.L."/>
            <person name="Kemper E.L."/>
            <person name="Kitajima J.P."/>
            <person name="Krieger J.E."/>
            <person name="Kuramae E.E."/>
            <person name="Laigret F."/>
            <person name="Lambais M.R."/>
            <person name="Leite L.C.C."/>
            <person name="Lemos E.G.M."/>
            <person name="Lemos M.V.F."/>
            <person name="Lopes S.A."/>
            <person name="Lopes C.R."/>
            <person name="Machado J.A."/>
            <person name="Machado M.A."/>
            <person name="Madeira A.M.B.N."/>
            <person name="Madeira H.M.F."/>
            <person name="Marino C.L."/>
            <person name="Marques M.V."/>
            <person name="Martins E.A.L."/>
            <person name="Martins E.M.F."/>
            <person name="Matsukuma A.Y."/>
            <person name="Menck C.F.M."/>
            <person name="Miracca E.C."/>
            <person name="Miyaki C.Y."/>
            <person name="Monteiro-Vitorello C.B."/>
            <person name="Moon D.H."/>
            <person name="Nagai M.A."/>
            <person name="Nascimento A.L.T.O."/>
            <person name="Netto L.E.S."/>
            <person name="Nhani A. Jr."/>
            <person name="Nobrega F.G."/>
            <person name="Nunes L.R."/>
            <person name="Oliveira M.A."/>
            <person name="de Oliveira M.C."/>
            <person name="de Oliveira R.C."/>
            <person name="Palmieri D.A."/>
            <person name="Paris A."/>
            <person name="Peixoto B.R."/>
            <person name="Pereira G.A.G."/>
            <person name="Pereira H.A. Jr."/>
            <person name="Pesquero J.B."/>
            <person name="Quaggio R.B."/>
            <person name="Roberto P.G."/>
            <person name="Rodrigues V."/>
            <person name="de Rosa A.J.M."/>
            <person name="de Rosa V.E. Jr."/>
            <person name="de Sa R.G."/>
            <person name="Santelli R.V."/>
            <person name="Sawasaki H.E."/>
            <person name="da Silva A.C.R."/>
            <person name="da Silva A.M."/>
            <person name="da Silva F.R."/>
            <person name="Silva W.A. Jr."/>
            <person name="da Silveira J.F."/>
            <person name="Silvestri M.L.Z."/>
            <person name="Siqueira W.J."/>
            <person name="de Souza A.A."/>
            <person name="de Souza A.P."/>
            <person name="Terenzi M.F."/>
            <person name="Truffi D."/>
            <person name="Tsai S.M."/>
            <person name="Tsuhako M.H."/>
            <person name="Vallada H."/>
            <person name="Van Sluys M.A."/>
            <person name="Verjovski-Almeida S."/>
            <person name="Vettore A.L."/>
            <person name="Zago M.A."/>
            <person name="Zatz M."/>
            <person name="Meidanis J."/>
            <person name="Setubal J.C."/>
        </authorList>
    </citation>
    <scope>NUCLEOTIDE SEQUENCE [LARGE SCALE GENOMIC DNA]</scope>
    <source>
        <strain>9a5c</strain>
    </source>
</reference>
<dbReference type="EMBL" id="AE003849">
    <property type="protein sequence ID" value="AAF85434.1"/>
    <property type="status" value="ALT_INIT"/>
    <property type="molecule type" value="Genomic_DNA"/>
</dbReference>
<dbReference type="PIR" id="F82531">
    <property type="entry name" value="F82531"/>
</dbReference>
<dbReference type="RefSeq" id="WP_010895053.1">
    <property type="nucleotide sequence ID" value="NC_002488.3"/>
</dbReference>
<dbReference type="SMR" id="Q9PA82"/>
<dbReference type="STRING" id="160492.XF_2637"/>
<dbReference type="KEGG" id="xfa:XF_2637"/>
<dbReference type="eggNOG" id="COG0080">
    <property type="taxonomic scope" value="Bacteria"/>
</dbReference>
<dbReference type="HOGENOM" id="CLU_074237_2_0_6"/>
<dbReference type="Proteomes" id="UP000000812">
    <property type="component" value="Chromosome"/>
</dbReference>
<dbReference type="GO" id="GO:0022625">
    <property type="term" value="C:cytosolic large ribosomal subunit"/>
    <property type="evidence" value="ECO:0007669"/>
    <property type="project" value="TreeGrafter"/>
</dbReference>
<dbReference type="GO" id="GO:0070180">
    <property type="term" value="F:large ribosomal subunit rRNA binding"/>
    <property type="evidence" value="ECO:0007669"/>
    <property type="project" value="UniProtKB-UniRule"/>
</dbReference>
<dbReference type="GO" id="GO:0003735">
    <property type="term" value="F:structural constituent of ribosome"/>
    <property type="evidence" value="ECO:0007669"/>
    <property type="project" value="InterPro"/>
</dbReference>
<dbReference type="GO" id="GO:0006412">
    <property type="term" value="P:translation"/>
    <property type="evidence" value="ECO:0007669"/>
    <property type="project" value="UniProtKB-UniRule"/>
</dbReference>
<dbReference type="CDD" id="cd00349">
    <property type="entry name" value="Ribosomal_L11"/>
    <property type="match status" value="1"/>
</dbReference>
<dbReference type="FunFam" id="1.10.10.250:FF:000001">
    <property type="entry name" value="50S ribosomal protein L11"/>
    <property type="match status" value="1"/>
</dbReference>
<dbReference type="FunFam" id="3.30.1550.10:FF:000001">
    <property type="entry name" value="50S ribosomal protein L11"/>
    <property type="match status" value="1"/>
</dbReference>
<dbReference type="Gene3D" id="1.10.10.250">
    <property type="entry name" value="Ribosomal protein L11, C-terminal domain"/>
    <property type="match status" value="1"/>
</dbReference>
<dbReference type="Gene3D" id="3.30.1550.10">
    <property type="entry name" value="Ribosomal protein L11/L12, N-terminal domain"/>
    <property type="match status" value="1"/>
</dbReference>
<dbReference type="HAMAP" id="MF_00736">
    <property type="entry name" value="Ribosomal_uL11"/>
    <property type="match status" value="1"/>
</dbReference>
<dbReference type="InterPro" id="IPR000911">
    <property type="entry name" value="Ribosomal_uL11"/>
</dbReference>
<dbReference type="InterPro" id="IPR006519">
    <property type="entry name" value="Ribosomal_uL11_bac-typ"/>
</dbReference>
<dbReference type="InterPro" id="IPR020783">
    <property type="entry name" value="Ribosomal_uL11_C"/>
</dbReference>
<dbReference type="InterPro" id="IPR036769">
    <property type="entry name" value="Ribosomal_uL11_C_sf"/>
</dbReference>
<dbReference type="InterPro" id="IPR020785">
    <property type="entry name" value="Ribosomal_uL11_CS"/>
</dbReference>
<dbReference type="InterPro" id="IPR020784">
    <property type="entry name" value="Ribosomal_uL11_N"/>
</dbReference>
<dbReference type="InterPro" id="IPR036796">
    <property type="entry name" value="Ribosomal_uL11_N_sf"/>
</dbReference>
<dbReference type="NCBIfam" id="TIGR01632">
    <property type="entry name" value="L11_bact"/>
    <property type="match status" value="1"/>
</dbReference>
<dbReference type="PANTHER" id="PTHR11661">
    <property type="entry name" value="60S RIBOSOMAL PROTEIN L12"/>
    <property type="match status" value="1"/>
</dbReference>
<dbReference type="PANTHER" id="PTHR11661:SF1">
    <property type="entry name" value="LARGE RIBOSOMAL SUBUNIT PROTEIN UL11M"/>
    <property type="match status" value="1"/>
</dbReference>
<dbReference type="Pfam" id="PF00298">
    <property type="entry name" value="Ribosomal_L11"/>
    <property type="match status" value="1"/>
</dbReference>
<dbReference type="Pfam" id="PF03946">
    <property type="entry name" value="Ribosomal_L11_N"/>
    <property type="match status" value="1"/>
</dbReference>
<dbReference type="SMART" id="SM00649">
    <property type="entry name" value="RL11"/>
    <property type="match status" value="1"/>
</dbReference>
<dbReference type="SUPFAM" id="SSF54747">
    <property type="entry name" value="Ribosomal L11/L12e N-terminal domain"/>
    <property type="match status" value="1"/>
</dbReference>
<dbReference type="SUPFAM" id="SSF46906">
    <property type="entry name" value="Ribosomal protein L11, C-terminal domain"/>
    <property type="match status" value="1"/>
</dbReference>
<dbReference type="PROSITE" id="PS00359">
    <property type="entry name" value="RIBOSOMAL_L11"/>
    <property type="match status" value="1"/>
</dbReference>
<accession>Q9PA82</accession>
<gene>
    <name evidence="1" type="primary">rplK</name>
    <name type="ordered locus">XF_2637</name>
</gene>
<feature type="chain" id="PRO_0000104416" description="Large ribosomal subunit protein uL11">
    <location>
        <begin position="1"/>
        <end position="142"/>
    </location>
</feature>
<proteinExistence type="inferred from homology"/>
<organism>
    <name type="scientific">Xylella fastidiosa (strain 9a5c)</name>
    <dbReference type="NCBI Taxonomy" id="160492"/>
    <lineage>
        <taxon>Bacteria</taxon>
        <taxon>Pseudomonadati</taxon>
        <taxon>Pseudomonadota</taxon>
        <taxon>Gammaproteobacteria</taxon>
        <taxon>Lysobacterales</taxon>
        <taxon>Lysobacteraceae</taxon>
        <taxon>Xylella</taxon>
    </lineage>
</organism>
<keyword id="KW-0488">Methylation</keyword>
<keyword id="KW-0687">Ribonucleoprotein</keyword>
<keyword id="KW-0689">Ribosomal protein</keyword>
<keyword id="KW-0694">RNA-binding</keyword>
<keyword id="KW-0699">rRNA-binding</keyword>
<sequence>MAKKVIAYIKLQVKAGQASPSPPVGPALGQRGLNIMDFCKAFNAATQKVEQGLPIPVVITAYSDRTFTFITKTPPASILLKKIVGIQSGSKRPNTEKVGKVTRKQLEDIAKTKELDMTAADLDAAVRTIAGSARSMGLVVEG</sequence>
<evidence type="ECO:0000255" key="1">
    <source>
        <dbReference type="HAMAP-Rule" id="MF_00736"/>
    </source>
</evidence>
<evidence type="ECO:0000305" key="2"/>